<gene>
    <name evidence="1" type="primary">lolB</name>
    <name type="ordered locus">Sputw3181_3376</name>
</gene>
<dbReference type="EMBL" id="CP000503">
    <property type="protein sequence ID" value="ABM26188.1"/>
    <property type="molecule type" value="Genomic_DNA"/>
</dbReference>
<dbReference type="RefSeq" id="WP_011790632.1">
    <property type="nucleotide sequence ID" value="NC_008750.1"/>
</dbReference>
<dbReference type="SMR" id="A1RNE3"/>
<dbReference type="GeneID" id="67442306"/>
<dbReference type="KEGG" id="shw:Sputw3181_3376"/>
<dbReference type="HOGENOM" id="CLU_092816_1_0_6"/>
<dbReference type="Proteomes" id="UP000002597">
    <property type="component" value="Chromosome"/>
</dbReference>
<dbReference type="GO" id="GO:0009279">
    <property type="term" value="C:cell outer membrane"/>
    <property type="evidence" value="ECO:0007669"/>
    <property type="project" value="UniProtKB-SubCell"/>
</dbReference>
<dbReference type="GO" id="GO:0044874">
    <property type="term" value="P:lipoprotein localization to outer membrane"/>
    <property type="evidence" value="ECO:0007669"/>
    <property type="project" value="UniProtKB-UniRule"/>
</dbReference>
<dbReference type="GO" id="GO:0015031">
    <property type="term" value="P:protein transport"/>
    <property type="evidence" value="ECO:0007669"/>
    <property type="project" value="UniProtKB-KW"/>
</dbReference>
<dbReference type="CDD" id="cd16326">
    <property type="entry name" value="LolB"/>
    <property type="match status" value="1"/>
</dbReference>
<dbReference type="Gene3D" id="2.50.20.10">
    <property type="entry name" value="Lipoprotein localisation LolA/LolB/LppX"/>
    <property type="match status" value="1"/>
</dbReference>
<dbReference type="HAMAP" id="MF_00233">
    <property type="entry name" value="LolB"/>
    <property type="match status" value="1"/>
</dbReference>
<dbReference type="InterPro" id="IPR029046">
    <property type="entry name" value="LolA/LolB/LppX"/>
</dbReference>
<dbReference type="InterPro" id="IPR004565">
    <property type="entry name" value="OM_lipoprot_LolB"/>
</dbReference>
<dbReference type="NCBIfam" id="TIGR00548">
    <property type="entry name" value="lolB"/>
    <property type="match status" value="1"/>
</dbReference>
<dbReference type="Pfam" id="PF03550">
    <property type="entry name" value="LolB"/>
    <property type="match status" value="1"/>
</dbReference>
<dbReference type="SUPFAM" id="SSF89392">
    <property type="entry name" value="Prokaryotic lipoproteins and lipoprotein localization factors"/>
    <property type="match status" value="1"/>
</dbReference>
<dbReference type="PROSITE" id="PS51257">
    <property type="entry name" value="PROKAR_LIPOPROTEIN"/>
    <property type="match status" value="1"/>
</dbReference>
<keyword id="KW-0998">Cell outer membrane</keyword>
<keyword id="KW-0143">Chaperone</keyword>
<keyword id="KW-0449">Lipoprotein</keyword>
<keyword id="KW-0472">Membrane</keyword>
<keyword id="KW-0564">Palmitate</keyword>
<keyword id="KW-0653">Protein transport</keyword>
<keyword id="KW-0732">Signal</keyword>
<keyword id="KW-0813">Transport</keyword>
<sequence length="214" mass="23936">MNNLKRFTESIFSCIALSTLLFLGGCQTLPPADDLTPITVSHPDQAKAWELQGKLAIKTPEDKLSANLYWRHSEERDELTLTTMLGTTVLTLEATPNSAHLHIDGKDFKDNNAQDLLERVSGWSIPLADLPLWITGQIGSQDRVLSRDSKANPKQLINDQTPPSWVVEFLSWQLQSGAHIPHQLKLERGDLQLKLQINQWQALGKATIMIGEKP</sequence>
<comment type="function">
    <text evidence="1">Plays a critical role in the incorporation of lipoproteins in the outer membrane after they are released by the LolA protein.</text>
</comment>
<comment type="subunit">
    <text evidence="1">Monomer.</text>
</comment>
<comment type="subcellular location">
    <subcellularLocation>
        <location evidence="1">Cell outer membrane</location>
        <topology evidence="1">Lipid-anchor</topology>
    </subcellularLocation>
</comment>
<comment type="similarity">
    <text evidence="1">Belongs to the LolB family.</text>
</comment>
<reference key="1">
    <citation type="submission" date="2006-12" db="EMBL/GenBank/DDBJ databases">
        <title>Complete sequence of Shewanella sp. W3-18-1.</title>
        <authorList>
            <consortium name="US DOE Joint Genome Institute"/>
            <person name="Copeland A."/>
            <person name="Lucas S."/>
            <person name="Lapidus A."/>
            <person name="Barry K."/>
            <person name="Detter J.C."/>
            <person name="Glavina del Rio T."/>
            <person name="Hammon N."/>
            <person name="Israni S."/>
            <person name="Dalin E."/>
            <person name="Tice H."/>
            <person name="Pitluck S."/>
            <person name="Chain P."/>
            <person name="Malfatti S."/>
            <person name="Shin M."/>
            <person name="Vergez L."/>
            <person name="Schmutz J."/>
            <person name="Larimer F."/>
            <person name="Land M."/>
            <person name="Hauser L."/>
            <person name="Kyrpides N."/>
            <person name="Lykidis A."/>
            <person name="Tiedje J."/>
            <person name="Richardson P."/>
        </authorList>
    </citation>
    <scope>NUCLEOTIDE SEQUENCE [LARGE SCALE GENOMIC DNA]</scope>
    <source>
        <strain>W3-18-1</strain>
    </source>
</reference>
<organism>
    <name type="scientific">Shewanella sp. (strain W3-18-1)</name>
    <dbReference type="NCBI Taxonomy" id="351745"/>
    <lineage>
        <taxon>Bacteria</taxon>
        <taxon>Pseudomonadati</taxon>
        <taxon>Pseudomonadota</taxon>
        <taxon>Gammaproteobacteria</taxon>
        <taxon>Alteromonadales</taxon>
        <taxon>Shewanellaceae</taxon>
        <taxon>Shewanella</taxon>
    </lineage>
</organism>
<name>LOLB_SHESW</name>
<feature type="signal peptide" evidence="1">
    <location>
        <begin position="1"/>
        <end position="25"/>
    </location>
</feature>
<feature type="chain" id="PRO_1000021684" description="Outer-membrane lipoprotein LolB">
    <location>
        <begin position="26"/>
        <end position="214"/>
    </location>
</feature>
<feature type="lipid moiety-binding region" description="N-palmitoyl cysteine" evidence="1">
    <location>
        <position position="26"/>
    </location>
</feature>
<feature type="lipid moiety-binding region" description="S-diacylglycerol cysteine" evidence="1">
    <location>
        <position position="26"/>
    </location>
</feature>
<proteinExistence type="inferred from homology"/>
<protein>
    <recommendedName>
        <fullName evidence="1">Outer-membrane lipoprotein LolB</fullName>
    </recommendedName>
</protein>
<evidence type="ECO:0000255" key="1">
    <source>
        <dbReference type="HAMAP-Rule" id="MF_00233"/>
    </source>
</evidence>
<accession>A1RNE3</accession>